<dbReference type="EMBL" id="CR382123">
    <property type="protein sequence ID" value="CAH01336.1"/>
    <property type="molecule type" value="Genomic_DNA"/>
</dbReference>
<dbReference type="RefSeq" id="XP_452485.1">
    <property type="nucleotide sequence ID" value="XM_452485.1"/>
</dbReference>
<dbReference type="FunCoup" id="Q6CUA4">
    <property type="interactions" value="55"/>
</dbReference>
<dbReference type="STRING" id="284590.Q6CUA4"/>
<dbReference type="PaxDb" id="284590-Q6CUA4"/>
<dbReference type="KEGG" id="kla:KLLA0_C06468g"/>
<dbReference type="eggNOG" id="ENOG502QQU5">
    <property type="taxonomic scope" value="Eukaryota"/>
</dbReference>
<dbReference type="HOGENOM" id="CLU_016236_3_0_1"/>
<dbReference type="InParanoid" id="Q6CUA4"/>
<dbReference type="OMA" id="FAKEMVG"/>
<dbReference type="Proteomes" id="UP000000598">
    <property type="component" value="Chromosome C"/>
</dbReference>
<dbReference type="GO" id="GO:0005743">
    <property type="term" value="C:mitochondrial inner membrane"/>
    <property type="evidence" value="ECO:0007669"/>
    <property type="project" value="UniProtKB-SubCell"/>
</dbReference>
<dbReference type="GO" id="GO:0000001">
    <property type="term" value="P:mitochondrion inheritance"/>
    <property type="evidence" value="ECO:0007669"/>
    <property type="project" value="InterPro"/>
</dbReference>
<dbReference type="GO" id="GO:0007005">
    <property type="term" value="P:mitochondrion organization"/>
    <property type="evidence" value="ECO:0007669"/>
    <property type="project" value="InterPro"/>
</dbReference>
<dbReference type="InterPro" id="IPR012571">
    <property type="entry name" value="Mdm31/Mdm32"/>
</dbReference>
<dbReference type="PANTHER" id="PTHR31068">
    <property type="entry name" value="MITOCHONDRIAL DISTRIBUTION AND MORPHOLOGY PROTEIN 31"/>
    <property type="match status" value="1"/>
</dbReference>
<dbReference type="PANTHER" id="PTHR31068:SF1">
    <property type="entry name" value="MITOCHONDRIAL DISTRIBUTION AND MORPHOLOGY PROTEIN 32"/>
    <property type="match status" value="1"/>
</dbReference>
<dbReference type="Pfam" id="PF08118">
    <property type="entry name" value="MDM31_MDM32"/>
    <property type="match status" value="2"/>
</dbReference>
<evidence type="ECO:0000250" key="1"/>
<evidence type="ECO:0000255" key="2"/>
<evidence type="ECO:0000305" key="3"/>
<gene>
    <name type="primary">MDM32</name>
    <name type="ordered locus">KLLA0C06468g</name>
</gene>
<accession>Q6CUA4</accession>
<name>MDM32_KLULA</name>
<protein>
    <recommendedName>
        <fullName>Mitochondrial distribution and morphology protein 32</fullName>
    </recommendedName>
</protein>
<keyword id="KW-0472">Membrane</keyword>
<keyword id="KW-0496">Mitochondrion</keyword>
<keyword id="KW-0999">Mitochondrion inner membrane</keyword>
<keyword id="KW-1185">Reference proteome</keyword>
<keyword id="KW-0809">Transit peptide</keyword>
<keyword id="KW-0812">Transmembrane</keyword>
<keyword id="KW-1133">Transmembrane helix</keyword>
<sequence>MFTVLGRVMNRHCALRAHSRIRMPTPMKVSSLLPLPHNLLRTYATEKHDMDELNKSTDYMHIQNILLQKEKELSTKHTLLKEATGFYDRFKINTKWFLIRGNRPFSFDELSTLFSWLIISQIIWVILGTTTFVSLVLFTFNTVFAKEMVGKFVGNTLNKYIDSCDVEFQDALVPEWKKGCIRFRSVKVRTVTDGKSDVPSDQLQFDLKFNQVDITLSVRKWMTGHGLIDNLTVLGMHGKVVLNDVNENKLVGWFSNPEYHLGAVKVCDSCFTLRDGNQDYRISIYNMDMNRLRFEWCVSDFFNANVVTGAINHSLFTIHKRQHKLAYLQDLEKDLSPWKRITRLRLDRISVKDLGLDKSSSFNWIEEGSVEIIADLMLPNVEDESQDSDEEKNNKYMVMDLKFNFRDLKAKFPESAPTLSNGETVISFDELKPIINYINNRRVIFNSVATTETIDPDWNRITPVSIKRQKSYPDTTVIPTSVTWPDGEDEVQINKEIIKYHDQPTTNTNNLILKCRIVKNIDELQNVALFRESGVYDVLAMELYVDLMKIVEEWEFKKKNSWMRLWGTTLASQLLIFGLGAMV</sequence>
<comment type="function">
    <text evidence="1">Involved in the organization of the mitochondrial membranes and the global structure of the mitochondria. Also required for mitochondrial distribution and mobility as well as for the maintenance of mitochondrial DNA nucleoids structures (By similarity).</text>
</comment>
<comment type="subcellular location">
    <subcellularLocation>
        <location evidence="1">Mitochondrion inner membrane</location>
        <topology evidence="1">Multi-pass membrane protein</topology>
    </subcellularLocation>
</comment>
<comment type="similarity">
    <text evidence="3">Belongs to the MDM31/MDM32 family.</text>
</comment>
<feature type="transit peptide" description="Mitochondrion" evidence="2">
    <location>
        <begin position="1"/>
        <end position="43"/>
    </location>
</feature>
<feature type="chain" id="PRO_0000333679" description="Mitochondrial distribution and morphology protein 32">
    <location>
        <begin position="44"/>
        <end position="583"/>
    </location>
</feature>
<feature type="topological domain" description="Mitochondrial matrix" evidence="2">
    <location>
        <begin position="44"/>
        <end position="117"/>
    </location>
</feature>
<feature type="transmembrane region" description="Helical" evidence="2">
    <location>
        <begin position="118"/>
        <end position="138"/>
    </location>
</feature>
<feature type="topological domain" description="Mitochondrial intermembrane" evidence="2">
    <location>
        <begin position="139"/>
        <end position="562"/>
    </location>
</feature>
<feature type="transmembrane region" description="Helical" evidence="2">
    <location>
        <begin position="563"/>
        <end position="583"/>
    </location>
</feature>
<reference key="1">
    <citation type="journal article" date="2004" name="Nature">
        <title>Genome evolution in yeasts.</title>
        <authorList>
            <person name="Dujon B."/>
            <person name="Sherman D."/>
            <person name="Fischer G."/>
            <person name="Durrens P."/>
            <person name="Casaregola S."/>
            <person name="Lafontaine I."/>
            <person name="de Montigny J."/>
            <person name="Marck C."/>
            <person name="Neuveglise C."/>
            <person name="Talla E."/>
            <person name="Goffard N."/>
            <person name="Frangeul L."/>
            <person name="Aigle M."/>
            <person name="Anthouard V."/>
            <person name="Babour A."/>
            <person name="Barbe V."/>
            <person name="Barnay S."/>
            <person name="Blanchin S."/>
            <person name="Beckerich J.-M."/>
            <person name="Beyne E."/>
            <person name="Bleykasten C."/>
            <person name="Boisrame A."/>
            <person name="Boyer J."/>
            <person name="Cattolico L."/>
            <person name="Confanioleri F."/>
            <person name="de Daruvar A."/>
            <person name="Despons L."/>
            <person name="Fabre E."/>
            <person name="Fairhead C."/>
            <person name="Ferry-Dumazet H."/>
            <person name="Groppi A."/>
            <person name="Hantraye F."/>
            <person name="Hennequin C."/>
            <person name="Jauniaux N."/>
            <person name="Joyet P."/>
            <person name="Kachouri R."/>
            <person name="Kerrest A."/>
            <person name="Koszul R."/>
            <person name="Lemaire M."/>
            <person name="Lesur I."/>
            <person name="Ma L."/>
            <person name="Muller H."/>
            <person name="Nicaud J.-M."/>
            <person name="Nikolski M."/>
            <person name="Oztas S."/>
            <person name="Ozier-Kalogeropoulos O."/>
            <person name="Pellenz S."/>
            <person name="Potier S."/>
            <person name="Richard G.-F."/>
            <person name="Straub M.-L."/>
            <person name="Suleau A."/>
            <person name="Swennen D."/>
            <person name="Tekaia F."/>
            <person name="Wesolowski-Louvel M."/>
            <person name="Westhof E."/>
            <person name="Wirth B."/>
            <person name="Zeniou-Meyer M."/>
            <person name="Zivanovic Y."/>
            <person name="Bolotin-Fukuhara M."/>
            <person name="Thierry A."/>
            <person name="Bouchier C."/>
            <person name="Caudron B."/>
            <person name="Scarpelli C."/>
            <person name="Gaillardin C."/>
            <person name="Weissenbach J."/>
            <person name="Wincker P."/>
            <person name="Souciet J.-L."/>
        </authorList>
    </citation>
    <scope>NUCLEOTIDE SEQUENCE [LARGE SCALE GENOMIC DNA]</scope>
    <source>
        <strain>ATCC 8585 / CBS 2359 / DSM 70799 / NBRC 1267 / NRRL Y-1140 / WM37</strain>
    </source>
</reference>
<organism>
    <name type="scientific">Kluyveromyces lactis (strain ATCC 8585 / CBS 2359 / DSM 70799 / NBRC 1267 / NRRL Y-1140 / WM37)</name>
    <name type="common">Yeast</name>
    <name type="synonym">Candida sphaerica</name>
    <dbReference type="NCBI Taxonomy" id="284590"/>
    <lineage>
        <taxon>Eukaryota</taxon>
        <taxon>Fungi</taxon>
        <taxon>Dikarya</taxon>
        <taxon>Ascomycota</taxon>
        <taxon>Saccharomycotina</taxon>
        <taxon>Saccharomycetes</taxon>
        <taxon>Saccharomycetales</taxon>
        <taxon>Saccharomycetaceae</taxon>
        <taxon>Kluyveromyces</taxon>
    </lineage>
</organism>
<proteinExistence type="inferred from homology"/>